<reference key="1">
    <citation type="journal article" date="2016" name="J. Am. Chem. Soc.">
        <title>Discovery of key dioxygenases that diverged the paraherquonin and acetoxydehydroaustin pathways in Penicillium brasilianum.</title>
        <authorList>
            <person name="Matsuda Y."/>
            <person name="Iwabuchi T."/>
            <person name="Fujimoto T."/>
            <person name="Awakawa T."/>
            <person name="Nakashima Y."/>
            <person name="Mori T."/>
            <person name="Zhang H."/>
            <person name="Hayashi F."/>
            <person name="Abe I."/>
        </authorList>
    </citation>
    <scope>NUCLEOTIDE SEQUENCE [GENOMIC DNA]</scope>
    <scope>FUNCTION</scope>
    <scope>PATHWAY</scope>
    <source>
        <strain>ATCC 22354 / NBRC 6234 / CBS 338.59 / FRR 3454 / IMI 68220</strain>
    </source>
</reference>
<reference key="2">
    <citation type="journal article" date="2017" name="Nat. Chem. Biol.">
        <title>Molecular basis for the unusual ring reconstruction in fungal meroterpenoid biogenesis.</title>
        <authorList>
            <person name="Mori T."/>
            <person name="Iwabuchi T."/>
            <person name="Hoshino S."/>
            <person name="Wang H."/>
            <person name="Matsuda Y."/>
            <person name="Abe I."/>
        </authorList>
    </citation>
    <scope>FUNCTION</scope>
</reference>
<reference key="3">
    <citation type="journal article" date="2018" name="Nat. Commun.">
        <title>Structure function and engineering of multifunctional non-heme iron dependent oxygenases in fungal meroterpenoid biosynthesis.</title>
        <authorList>
            <person name="Nakashima Y."/>
            <person name="Mori T."/>
            <person name="Nakamura H."/>
            <person name="Awakawa T."/>
            <person name="Hoshino S."/>
            <person name="Senda M."/>
            <person name="Senda T."/>
            <person name="Abe I."/>
        </authorList>
    </citation>
    <scope>FUNCTION</scope>
</reference>
<dbReference type="EC" id="2.5.1.-" evidence="8"/>
<dbReference type="EMBL" id="LC127182">
    <property type="protein sequence ID" value="BAV69306.1"/>
    <property type="molecule type" value="Genomic_DNA"/>
</dbReference>
<dbReference type="SMR" id="A0A1E1FFM8"/>
<dbReference type="UniPathway" id="UPA00213"/>
<dbReference type="GO" id="GO:0005743">
    <property type="term" value="C:mitochondrial inner membrane"/>
    <property type="evidence" value="ECO:0007669"/>
    <property type="project" value="TreeGrafter"/>
</dbReference>
<dbReference type="GO" id="GO:0008412">
    <property type="term" value="F:4-hydroxybenzoate polyprenyltransferase activity"/>
    <property type="evidence" value="ECO:0007669"/>
    <property type="project" value="TreeGrafter"/>
</dbReference>
<dbReference type="GO" id="GO:0016114">
    <property type="term" value="P:terpenoid biosynthetic process"/>
    <property type="evidence" value="ECO:0007669"/>
    <property type="project" value="UniProtKB-UniPathway"/>
</dbReference>
<dbReference type="GO" id="GO:0006744">
    <property type="term" value="P:ubiquinone biosynthetic process"/>
    <property type="evidence" value="ECO:0007669"/>
    <property type="project" value="TreeGrafter"/>
</dbReference>
<dbReference type="CDD" id="cd13959">
    <property type="entry name" value="PT_UbiA_COQ2"/>
    <property type="match status" value="1"/>
</dbReference>
<dbReference type="FunFam" id="1.10.357.140:FF:000008">
    <property type="entry name" value="4-hydroxybenzoate octaprenyltransferase"/>
    <property type="match status" value="1"/>
</dbReference>
<dbReference type="Gene3D" id="1.10.357.140">
    <property type="entry name" value="UbiA prenyltransferase"/>
    <property type="match status" value="1"/>
</dbReference>
<dbReference type="Gene3D" id="1.20.120.1780">
    <property type="entry name" value="UbiA prenyltransferase"/>
    <property type="match status" value="1"/>
</dbReference>
<dbReference type="InterPro" id="IPR039653">
    <property type="entry name" value="Prenyltransferase"/>
</dbReference>
<dbReference type="InterPro" id="IPR000537">
    <property type="entry name" value="UbiA_prenyltransferase"/>
</dbReference>
<dbReference type="InterPro" id="IPR030470">
    <property type="entry name" value="UbiA_prenylTrfase_CS"/>
</dbReference>
<dbReference type="InterPro" id="IPR044878">
    <property type="entry name" value="UbiA_sf"/>
</dbReference>
<dbReference type="PANTHER" id="PTHR11048:SF39">
    <property type="entry name" value="POLYPRENYL TRANSFERASE AUSN"/>
    <property type="match status" value="1"/>
</dbReference>
<dbReference type="PANTHER" id="PTHR11048">
    <property type="entry name" value="PRENYLTRANSFERASES"/>
    <property type="match status" value="1"/>
</dbReference>
<dbReference type="Pfam" id="PF01040">
    <property type="entry name" value="UbiA"/>
    <property type="match status" value="1"/>
</dbReference>
<dbReference type="PROSITE" id="PS00943">
    <property type="entry name" value="UBIA"/>
    <property type="match status" value="1"/>
</dbReference>
<feature type="chain" id="PRO_0000449170" description="Polyprenyl transferase prhE">
    <location>
        <begin position="1"/>
        <end position="316"/>
    </location>
</feature>
<feature type="transmembrane region" description="Helical" evidence="3">
    <location>
        <begin position="45"/>
        <end position="65"/>
    </location>
</feature>
<feature type="transmembrane region" description="Helical" evidence="3">
    <location>
        <begin position="69"/>
        <end position="89"/>
    </location>
</feature>
<feature type="transmembrane region" description="Helical" evidence="3">
    <location>
        <begin position="114"/>
        <end position="134"/>
    </location>
</feature>
<feature type="transmembrane region" description="Helical" evidence="3">
    <location>
        <begin position="135"/>
        <end position="155"/>
    </location>
</feature>
<feature type="transmembrane region" description="Helical" evidence="3">
    <location>
        <begin position="163"/>
        <end position="183"/>
    </location>
</feature>
<feature type="transmembrane region" description="Helical" evidence="3">
    <location>
        <begin position="188"/>
        <end position="208"/>
    </location>
</feature>
<feature type="transmembrane region" description="Helical" evidence="3">
    <location>
        <begin position="231"/>
        <end position="253"/>
    </location>
</feature>
<feature type="transmembrane region" description="Helical" evidence="3">
    <location>
        <begin position="257"/>
        <end position="276"/>
    </location>
</feature>
<feature type="transmembrane region" description="Helical" evidence="3">
    <location>
        <begin position="296"/>
        <end position="316"/>
    </location>
</feature>
<sequence length="316" mass="34277">MPTKGDYQPPKDGILSKLPESAVPYGELLRIHRPLGYYLNISPYVVGVAYTAAISPVTLPSTFLLGRLVILSLWGFCIRSAGCAWNDLIDMDIDRQVSRTKLRPLPRGAVSPSGAALLAAFMFGCGGSLLLLLPSQCAFEAAIVVFFALLYPFGKRFSDHPQLILTNIAWAIPMAMSSLDMSPLDFPIPTLAMSFSIASVIVMIDIVYACQDAEEDKKVGARSMAVRYMEITDQIAYGLFFSGTLSLLVGGILRGLGFPFLIFSVGGHFLGFLRFLRASLGKGAKSALVESQAKSSCLLATMLLVFGLCFEYCVRL</sequence>
<protein>
    <recommendedName>
        <fullName evidence="6">Polyprenyl transferase prhE</fullName>
        <ecNumber evidence="8">2.5.1.-</ecNumber>
    </recommendedName>
    <alternativeName>
        <fullName evidence="6">Paraherquonin biosynthesis cluster protein E</fullName>
    </alternativeName>
</protein>
<name>PRHE_PENBI</name>
<gene>
    <name evidence="6" type="primary">prhE</name>
</gene>
<proteinExistence type="inferred from homology"/>
<organism>
    <name type="scientific">Penicillium brasilianum</name>
    <dbReference type="NCBI Taxonomy" id="104259"/>
    <lineage>
        <taxon>Eukaryota</taxon>
        <taxon>Fungi</taxon>
        <taxon>Dikarya</taxon>
        <taxon>Ascomycota</taxon>
        <taxon>Pezizomycotina</taxon>
        <taxon>Eurotiomycetes</taxon>
        <taxon>Eurotiomycetidae</taxon>
        <taxon>Eurotiales</taxon>
        <taxon>Aspergillaceae</taxon>
        <taxon>Penicillium</taxon>
    </lineage>
</organism>
<evidence type="ECO:0000250" key="1">
    <source>
        <dbReference type="UniProtKB" id="P32378"/>
    </source>
</evidence>
<evidence type="ECO:0000250" key="2">
    <source>
        <dbReference type="UniProtKB" id="Q5ATJ7"/>
    </source>
</evidence>
<evidence type="ECO:0000255" key="3"/>
<evidence type="ECO:0000269" key="4">
    <source>
    </source>
</evidence>
<evidence type="ECO:0000269" key="5">
    <source>
    </source>
</evidence>
<evidence type="ECO:0000303" key="6">
    <source>
    </source>
</evidence>
<evidence type="ECO:0000305" key="7"/>
<evidence type="ECO:0000305" key="8">
    <source>
    </source>
</evidence>
<evidence type="ECO:0000305" key="9">
    <source>
    </source>
</evidence>
<evidence type="ECO:0000305" key="10">
    <source>
    </source>
</evidence>
<accession>A0A1E1FFM8</accession>
<keyword id="KW-0460">Magnesium</keyword>
<keyword id="KW-0472">Membrane</keyword>
<keyword id="KW-0808">Transferase</keyword>
<keyword id="KW-0812">Transmembrane</keyword>
<keyword id="KW-1133">Transmembrane helix</keyword>
<comment type="function">
    <text evidence="2 4 5 8 9 10">Polyprenyl transferase; part of the gene cluster that mediates the biosynthesis of paraherquonin, a meroterpenoid with a unique, highly congested hexacyclic molecular architecture (PubMed:27602587). The first step of the pathway is the synthesis of 3,5-dimethylorsellinic acid (DMOA) by the polyketide synthase prhL (By similarity). Synthesis of DMOA is followed by farnesylation by the prenyltransferase prhE, methylesterification by the methyl-transferase prhM, epoxidation of the prenyl chain by the flavin-dependent monooxygenase prhF, and cyclization of the farnesyl moiety by the terpene cyclase prhH, to yield the tetracyclic intermediate, protoaustinoid A (By similarity). The short chain dehydrogenase prhI then oxidizes the C-3 alcohol group of the terpene cyclase product to transform protoaustinoid A into protoaustinoid B (PubMed:27602587). The FAD-binding monooxygenase prhJ catalyzes the oxidation of protoaustinoid B into preaustinoid A which is further oxidized into preaustinoid A1 by FAD-binding monooxygenase phrK (PubMed:27602587). Finally, prhA leads to berkeleydione via the berkeleyone B intermediate (PubMed:27602587, PubMed:29317628). PrhA is a multifunctional dioxygenase that first desaturates at C5-C6 to form berkeleyone B, followed by rearrangement of the A/B-ring to form the cycloheptadiene moiety in berkeleydione (PubMed:27602587, PubMed:29317628). Berkeleydione serves as the key intermediate for the biosynthesis of paraherquonin as well as many other meroterpenoids (Probable). The cytochrome P450 monooxygenases prhB, prhD, and prhN, as well as the isomerase prhC, are probably involved in the late stage of paraherquonin biosynthesis, after the production of berkeleydione (Probable). Especially prhC might be a multifunctional enzyme that catalyzes the D-ring expansion via intramolecular methoxy rearrangement, as well as the hydrolysis of the expanded D-ring (Probable).</text>
</comment>
<comment type="catalytic activity">
    <reaction evidence="8">
        <text>3,5-dimethylorsellinate + (2E,6E)-farnesyl diphosphate = (3R)-3-farnesyl-6-hydroxy-2,3,5-trimethyl-4-oxocyclohexa-1,5-diene-1-carboxylate + diphosphate + H(+)</text>
        <dbReference type="Rhea" id="RHEA:49632"/>
        <dbReference type="ChEBI" id="CHEBI:15378"/>
        <dbReference type="ChEBI" id="CHEBI:33019"/>
        <dbReference type="ChEBI" id="CHEBI:131856"/>
        <dbReference type="ChEBI" id="CHEBI:131857"/>
        <dbReference type="ChEBI" id="CHEBI:175763"/>
    </reaction>
    <physiologicalReaction direction="left-to-right" evidence="8">
        <dbReference type="Rhea" id="RHEA:49633"/>
    </physiologicalReaction>
</comment>
<comment type="cofactor">
    <cofactor evidence="1">
        <name>Mg(2+)</name>
        <dbReference type="ChEBI" id="CHEBI:18420"/>
    </cofactor>
</comment>
<comment type="pathway">
    <text evidence="8">Secondary metabolite biosynthesis; terpenoid biosynthesis.</text>
</comment>
<comment type="subcellular location">
    <subcellularLocation>
        <location evidence="3">Membrane</location>
        <topology evidence="3">Multi-pass membrane protein</topology>
    </subcellularLocation>
</comment>
<comment type="similarity">
    <text evidence="7">Belongs to the UbiA prenyltransferase family.</text>
</comment>